<protein>
    <recommendedName>
        <fullName>ER-derived vesicles protein ERV14</fullName>
    </recommendedName>
</protein>
<feature type="initiator methionine" description="Removed" evidence="3">
    <location>
        <position position="1"/>
    </location>
</feature>
<feature type="chain" id="PRO_0000122236" description="ER-derived vesicles protein ERV14">
    <location>
        <begin position="2"/>
        <end position="138"/>
    </location>
</feature>
<feature type="topological domain" description="Cytoplasmic" evidence="1">
    <location>
        <begin position="2"/>
        <end position="6"/>
    </location>
</feature>
<feature type="transmembrane region" description="Helical" evidence="1">
    <location>
        <begin position="7"/>
        <end position="27"/>
    </location>
</feature>
<feature type="topological domain" description="Extracellular" evidence="1">
    <location>
        <begin position="28"/>
        <end position="52"/>
    </location>
</feature>
<feature type="transmembrane region" description="Helical" evidence="1">
    <location>
        <begin position="53"/>
        <end position="73"/>
    </location>
</feature>
<feature type="topological domain" description="Cytoplasmic" evidence="1">
    <location>
        <begin position="74"/>
        <end position="111"/>
    </location>
</feature>
<feature type="transmembrane region" description="Helical" evidence="1">
    <location>
        <begin position="112"/>
        <end position="132"/>
    </location>
</feature>
<feature type="topological domain" description="Extracellular" evidence="1">
    <location>
        <begin position="133"/>
        <end position="138"/>
    </location>
</feature>
<dbReference type="EMBL" id="Z72576">
    <property type="protein sequence ID" value="CAA96756.1"/>
    <property type="molecule type" value="Genomic_DNA"/>
</dbReference>
<dbReference type="EMBL" id="AY558483">
    <property type="protein sequence ID" value="AAS56809.1"/>
    <property type="molecule type" value="Genomic_DNA"/>
</dbReference>
<dbReference type="EMBL" id="BK006941">
    <property type="protein sequence ID" value="DAA08048.1"/>
    <property type="molecule type" value="Genomic_DNA"/>
</dbReference>
<dbReference type="PIR" id="S64058">
    <property type="entry name" value="S64058"/>
</dbReference>
<dbReference type="RefSeq" id="NP_011461.1">
    <property type="nucleotide sequence ID" value="NM_001180919.1"/>
</dbReference>
<dbReference type="SMR" id="P53173"/>
<dbReference type="BioGRID" id="33193">
    <property type="interactions" value="476"/>
</dbReference>
<dbReference type="DIP" id="DIP-5457N"/>
<dbReference type="FunCoup" id="P53173">
    <property type="interactions" value="996"/>
</dbReference>
<dbReference type="IntAct" id="P53173">
    <property type="interactions" value="20"/>
</dbReference>
<dbReference type="STRING" id="4932.YGL054C"/>
<dbReference type="TCDB" id="8.A.61.1.1">
    <property type="family name" value="the endoplasmic reticulum-derived vesicle protein, erv14 (erv14) family"/>
</dbReference>
<dbReference type="PaxDb" id="4932-YGL054C"/>
<dbReference type="PeptideAtlas" id="P53173"/>
<dbReference type="TopDownProteomics" id="P53173"/>
<dbReference type="DNASU" id="852826"/>
<dbReference type="EnsemblFungi" id="YGL054C_mRNA">
    <property type="protein sequence ID" value="YGL054C"/>
    <property type="gene ID" value="YGL054C"/>
</dbReference>
<dbReference type="GeneID" id="852826"/>
<dbReference type="KEGG" id="sce:YGL054C"/>
<dbReference type="AGR" id="SGD:S000003022"/>
<dbReference type="SGD" id="S000003022">
    <property type="gene designation" value="ERV14"/>
</dbReference>
<dbReference type="VEuPathDB" id="FungiDB:YGL054C"/>
<dbReference type="eggNOG" id="KOG2729">
    <property type="taxonomic scope" value="Eukaryota"/>
</dbReference>
<dbReference type="GeneTree" id="ENSGT00950000182834"/>
<dbReference type="HOGENOM" id="CLU_112942_0_0_1"/>
<dbReference type="InParanoid" id="P53173"/>
<dbReference type="OMA" id="HKKECFI"/>
<dbReference type="OrthoDB" id="434393at2759"/>
<dbReference type="BioCyc" id="YEAST:G3O-30563-MONOMER"/>
<dbReference type="BioGRID-ORCS" id="852826">
    <property type="hits" value="0 hits in 10 CRISPR screens"/>
</dbReference>
<dbReference type="PRO" id="PR:P53173"/>
<dbReference type="Proteomes" id="UP000002311">
    <property type="component" value="Chromosome VII"/>
</dbReference>
<dbReference type="RNAct" id="P53173">
    <property type="molecule type" value="protein"/>
</dbReference>
<dbReference type="GO" id="GO:0071944">
    <property type="term" value="C:cell periphery"/>
    <property type="evidence" value="ECO:0007005"/>
    <property type="project" value="SGD"/>
</dbReference>
<dbReference type="GO" id="GO:0030134">
    <property type="term" value="C:COPII-coated ER to Golgi transport vesicle"/>
    <property type="evidence" value="ECO:0000314"/>
    <property type="project" value="SGD"/>
</dbReference>
<dbReference type="GO" id="GO:0005783">
    <property type="term" value="C:endoplasmic reticulum"/>
    <property type="evidence" value="ECO:0007005"/>
    <property type="project" value="SGD"/>
</dbReference>
<dbReference type="GO" id="GO:0005789">
    <property type="term" value="C:endoplasmic reticulum membrane"/>
    <property type="evidence" value="ECO:0000314"/>
    <property type="project" value="SGD"/>
</dbReference>
<dbReference type="GO" id="GO:0000139">
    <property type="term" value="C:Golgi membrane"/>
    <property type="evidence" value="ECO:0007669"/>
    <property type="project" value="UniProtKB-SubCell"/>
</dbReference>
<dbReference type="GO" id="GO:0038024">
    <property type="term" value="F:cargo receptor activity"/>
    <property type="evidence" value="ECO:0000314"/>
    <property type="project" value="SGD"/>
</dbReference>
<dbReference type="GO" id="GO:0005102">
    <property type="term" value="F:signaling receptor binding"/>
    <property type="evidence" value="ECO:0000318"/>
    <property type="project" value="GO_Central"/>
</dbReference>
<dbReference type="GO" id="GO:0030437">
    <property type="term" value="P:ascospore formation"/>
    <property type="evidence" value="ECO:0000315"/>
    <property type="project" value="SGD"/>
</dbReference>
<dbReference type="GO" id="GO:0007120">
    <property type="term" value="P:axial cellular bud site selection"/>
    <property type="evidence" value="ECO:0000315"/>
    <property type="project" value="SGD"/>
</dbReference>
<dbReference type="GO" id="GO:0006888">
    <property type="term" value="P:endoplasmic reticulum to Golgi vesicle-mediated transport"/>
    <property type="evidence" value="ECO:0000315"/>
    <property type="project" value="SGD"/>
</dbReference>
<dbReference type="GO" id="GO:1902684">
    <property type="term" value="P:negative regulation of receptor localization to synapse"/>
    <property type="evidence" value="ECO:0000315"/>
    <property type="project" value="UniProtKB"/>
</dbReference>
<dbReference type="GO" id="GO:2000311">
    <property type="term" value="P:regulation of AMPA receptor activity"/>
    <property type="evidence" value="ECO:0000315"/>
    <property type="project" value="UniProtKB"/>
</dbReference>
<dbReference type="InterPro" id="IPR003377">
    <property type="entry name" value="Cornichon"/>
</dbReference>
<dbReference type="InterPro" id="IPR033466">
    <property type="entry name" value="Cornichon_conserved"/>
</dbReference>
<dbReference type="PANTHER" id="PTHR12290">
    <property type="entry name" value="CORNICHON-RELATED"/>
    <property type="match status" value="1"/>
</dbReference>
<dbReference type="Pfam" id="PF03311">
    <property type="entry name" value="Cornichon"/>
    <property type="match status" value="1"/>
</dbReference>
<dbReference type="SMART" id="SM01398">
    <property type="entry name" value="Cornichon"/>
    <property type="match status" value="1"/>
</dbReference>
<dbReference type="PROSITE" id="PS01340">
    <property type="entry name" value="CORNICHON"/>
    <property type="match status" value="1"/>
</dbReference>
<evidence type="ECO:0000255" key="1"/>
<evidence type="ECO:0000269" key="2">
    <source>
    </source>
</evidence>
<evidence type="ECO:0000269" key="3">
    <source>
    </source>
</evidence>
<evidence type="ECO:0000305" key="4"/>
<gene>
    <name type="primary">ERV14</name>
    <name type="ordered locus">YGL054C</name>
</gene>
<accession>P53173</accession>
<accession>D6VU87</accession>
<sequence length="138" mass="15930">MGAWLFILAVVVNCINLFGQVHFTILYADLEADYINPIELCSKVNKLITPEAALHGALSLLFLLNGYWFVFLLNLPVLAYNLNKIYNKVQLLDATEIFRTLGKHKRESFLKLGFHLLMFFFYLYRMIMALIAESGDDF</sequence>
<reference key="1">
    <citation type="journal article" date="1997" name="Yeast">
        <title>The characterization of two new clusters of duplicated genes suggests a 'Lego' organization of the yeast Saccharomyces cerevisiae chromosomes.</title>
        <authorList>
            <person name="Feuermann M."/>
            <person name="de Montigny J."/>
            <person name="Potier S."/>
            <person name="Souciet J.-L."/>
        </authorList>
    </citation>
    <scope>NUCLEOTIDE SEQUENCE [GENOMIC DNA]</scope>
    <source>
        <strain>ATCC 204508 / S288c</strain>
    </source>
</reference>
<reference key="2">
    <citation type="journal article" date="1997" name="Nature">
        <title>The nucleotide sequence of Saccharomyces cerevisiae chromosome VII.</title>
        <authorList>
            <person name="Tettelin H."/>
            <person name="Agostoni-Carbone M.L."/>
            <person name="Albermann K."/>
            <person name="Albers M."/>
            <person name="Arroyo J."/>
            <person name="Backes U."/>
            <person name="Barreiros T."/>
            <person name="Bertani I."/>
            <person name="Bjourson A.J."/>
            <person name="Brueckner M."/>
            <person name="Bruschi C.V."/>
            <person name="Carignani G."/>
            <person name="Castagnoli L."/>
            <person name="Cerdan E."/>
            <person name="Clemente M.L."/>
            <person name="Coblenz A."/>
            <person name="Coglievina M."/>
            <person name="Coissac E."/>
            <person name="Defoor E."/>
            <person name="Del Bino S."/>
            <person name="Delius H."/>
            <person name="Delneri D."/>
            <person name="de Wergifosse P."/>
            <person name="Dujon B."/>
            <person name="Durand P."/>
            <person name="Entian K.-D."/>
            <person name="Eraso P."/>
            <person name="Escribano V."/>
            <person name="Fabiani L."/>
            <person name="Fartmann B."/>
            <person name="Feroli F."/>
            <person name="Feuermann M."/>
            <person name="Frontali L."/>
            <person name="Garcia-Gonzalez M."/>
            <person name="Garcia-Saez M.I."/>
            <person name="Goffeau A."/>
            <person name="Guerreiro P."/>
            <person name="Hani J."/>
            <person name="Hansen M."/>
            <person name="Hebling U."/>
            <person name="Hernandez K."/>
            <person name="Heumann K."/>
            <person name="Hilger F."/>
            <person name="Hofmann B."/>
            <person name="Indge K.J."/>
            <person name="James C.M."/>
            <person name="Klima R."/>
            <person name="Koetter P."/>
            <person name="Kramer B."/>
            <person name="Kramer W."/>
            <person name="Lauquin G."/>
            <person name="Leuther H."/>
            <person name="Louis E.J."/>
            <person name="Maillier E."/>
            <person name="Marconi A."/>
            <person name="Martegani E."/>
            <person name="Mazon M.J."/>
            <person name="Mazzoni C."/>
            <person name="McReynolds A.D.K."/>
            <person name="Melchioretto P."/>
            <person name="Mewes H.-W."/>
            <person name="Minenkova O."/>
            <person name="Mueller-Auer S."/>
            <person name="Nawrocki A."/>
            <person name="Netter P."/>
            <person name="Neu R."/>
            <person name="Nombela C."/>
            <person name="Oliver S.G."/>
            <person name="Panzeri L."/>
            <person name="Paoluzi S."/>
            <person name="Plevani P."/>
            <person name="Portetelle D."/>
            <person name="Portillo F."/>
            <person name="Potier S."/>
            <person name="Purnelle B."/>
            <person name="Rieger M."/>
            <person name="Riles L."/>
            <person name="Rinaldi T."/>
            <person name="Robben J."/>
            <person name="Rodrigues-Pousada C."/>
            <person name="Rodriguez-Belmonte E."/>
            <person name="Rodriguez-Torres A.M."/>
            <person name="Rose M."/>
            <person name="Ruzzi M."/>
            <person name="Saliola M."/>
            <person name="Sanchez-Perez M."/>
            <person name="Schaefer B."/>
            <person name="Schaefer M."/>
            <person name="Scharfe M."/>
            <person name="Schmidheini T."/>
            <person name="Schreer A."/>
            <person name="Skala J."/>
            <person name="Souciet J.-L."/>
            <person name="Steensma H.Y."/>
            <person name="Talla E."/>
            <person name="Thierry A."/>
            <person name="Vandenbol M."/>
            <person name="van der Aart Q.J.M."/>
            <person name="Van Dyck L."/>
            <person name="Vanoni M."/>
            <person name="Verhasselt P."/>
            <person name="Voet M."/>
            <person name="Volckaert G."/>
            <person name="Wambutt R."/>
            <person name="Watson M.D."/>
            <person name="Weber N."/>
            <person name="Wedler E."/>
            <person name="Wedler H."/>
            <person name="Wipfli P."/>
            <person name="Wolf K."/>
            <person name="Wright L.F."/>
            <person name="Zaccaria P."/>
            <person name="Zimmermann M."/>
            <person name="Zollner A."/>
            <person name="Kleine K."/>
        </authorList>
    </citation>
    <scope>NUCLEOTIDE SEQUENCE [LARGE SCALE GENOMIC DNA]</scope>
    <source>
        <strain>ATCC 204508 / S288c</strain>
    </source>
</reference>
<reference key="3">
    <citation type="journal article" date="2014" name="G3 (Bethesda)">
        <title>The reference genome sequence of Saccharomyces cerevisiae: Then and now.</title>
        <authorList>
            <person name="Engel S.R."/>
            <person name="Dietrich F.S."/>
            <person name="Fisk D.G."/>
            <person name="Binkley G."/>
            <person name="Balakrishnan R."/>
            <person name="Costanzo M.C."/>
            <person name="Dwight S.S."/>
            <person name="Hitz B.C."/>
            <person name="Karra K."/>
            <person name="Nash R.S."/>
            <person name="Weng S."/>
            <person name="Wong E.D."/>
            <person name="Lloyd P."/>
            <person name="Skrzypek M.S."/>
            <person name="Miyasato S.R."/>
            <person name="Simison M."/>
            <person name="Cherry J.M."/>
        </authorList>
    </citation>
    <scope>GENOME REANNOTATION</scope>
    <source>
        <strain>ATCC 204508 / S288c</strain>
    </source>
</reference>
<reference key="4">
    <citation type="journal article" date="2007" name="Genome Res.">
        <title>Approaching a complete repository of sequence-verified protein-encoding clones for Saccharomyces cerevisiae.</title>
        <authorList>
            <person name="Hu Y."/>
            <person name="Rolfs A."/>
            <person name="Bhullar B."/>
            <person name="Murthy T.V.S."/>
            <person name="Zhu C."/>
            <person name="Berger M.F."/>
            <person name="Camargo A.A."/>
            <person name="Kelley F."/>
            <person name="McCarron S."/>
            <person name="Jepson D."/>
            <person name="Richardson A."/>
            <person name="Raphael J."/>
            <person name="Moreira D."/>
            <person name="Taycher E."/>
            <person name="Zuo D."/>
            <person name="Mohr S."/>
            <person name="Kane M.F."/>
            <person name="Williamson J."/>
            <person name="Simpson A.J.G."/>
            <person name="Bulyk M.L."/>
            <person name="Harlow E."/>
            <person name="Marsischky G."/>
            <person name="Kolodner R.D."/>
            <person name="LaBaer J."/>
        </authorList>
    </citation>
    <scope>NUCLEOTIDE SEQUENCE [GENOMIC DNA]</scope>
    <source>
        <strain>ATCC 204508 / S288c</strain>
    </source>
</reference>
<reference key="5">
    <citation type="journal article" date="1998" name="J. Cell Biol.">
        <title>Transport of axl2p depends on erv14p, an ER-vesicle protein related to the Drosophila cornichon gene product.</title>
        <authorList>
            <person name="Powers J."/>
            <person name="Barlowe C."/>
        </authorList>
    </citation>
    <scope>PROTEIN SEQUENCE OF 2-19</scope>
    <scope>FUNCTION</scope>
    <scope>DISRUPTION PHENOTYPE</scope>
</reference>
<reference key="6">
    <citation type="journal article" date="2003" name="Nature">
        <title>Global analysis of protein expression in yeast.</title>
        <authorList>
            <person name="Ghaemmaghami S."/>
            <person name="Huh W.-K."/>
            <person name="Bower K."/>
            <person name="Howson R.W."/>
            <person name="Belle A."/>
            <person name="Dephoure N."/>
            <person name="O'Shea E.K."/>
            <person name="Weissman J.S."/>
        </authorList>
    </citation>
    <scope>LEVEL OF PROTEIN EXPRESSION [LARGE SCALE ANALYSIS]</scope>
</reference>
<keyword id="KW-0903">Direct protein sequencing</keyword>
<keyword id="KW-0256">Endoplasmic reticulum</keyword>
<keyword id="KW-0333">Golgi apparatus</keyword>
<keyword id="KW-0472">Membrane</keyword>
<keyword id="KW-1185">Reference proteome</keyword>
<keyword id="KW-0812">Transmembrane</keyword>
<keyword id="KW-1133">Transmembrane helix</keyword>
<proteinExistence type="evidence at protein level"/>
<comment type="function">
    <text evidence="3">Could regulate export of the bud site and axial growth sites selection protein AXL2 and possibly other secretory proteins from the endoplasmic reticulum in COPII-coated vesicles. Seems to be required for axial budding pattern in haploid cells.</text>
</comment>
<comment type="subcellular location">
    <subcellularLocation>
        <location>Endoplasmic reticulum membrane</location>
        <topology>Multi-pass membrane protein</topology>
    </subcellularLocation>
    <subcellularLocation>
        <location>Golgi apparatus membrane</location>
        <topology>Multi-pass membrane protein</topology>
    </subcellularLocation>
    <text>Resides in the endoplasmic and Golgi compartments, and then packaged into endoplasmic reticulum derived vesicles.</text>
</comment>
<comment type="disruption phenotype">
    <text evidence="3">Defects in cell polarity. Strains homozygous for ERV14 deletion do not sporulate.</text>
</comment>
<comment type="miscellaneous">
    <text evidence="2">Present with 7110 molecules/cell in log phase SD medium.</text>
</comment>
<comment type="similarity">
    <text evidence="4">Belongs to the cornichon family.</text>
</comment>
<name>ERV14_YEAST</name>
<organism>
    <name type="scientific">Saccharomyces cerevisiae (strain ATCC 204508 / S288c)</name>
    <name type="common">Baker's yeast</name>
    <dbReference type="NCBI Taxonomy" id="559292"/>
    <lineage>
        <taxon>Eukaryota</taxon>
        <taxon>Fungi</taxon>
        <taxon>Dikarya</taxon>
        <taxon>Ascomycota</taxon>
        <taxon>Saccharomycotina</taxon>
        <taxon>Saccharomycetes</taxon>
        <taxon>Saccharomycetales</taxon>
        <taxon>Saccharomycetaceae</taxon>
        <taxon>Saccharomyces</taxon>
    </lineage>
</organism>